<gene>
    <name evidence="1" type="primary">rpmG</name>
    <name type="ordered locus">SG2207</name>
</gene>
<feature type="chain" id="PRO_1000004196" description="Large ribosomal subunit protein bL33">
    <location>
        <begin position="1"/>
        <end position="55"/>
    </location>
</feature>
<organism>
    <name type="scientific">Sodalis glossinidius (strain morsitans)</name>
    <dbReference type="NCBI Taxonomy" id="343509"/>
    <lineage>
        <taxon>Bacteria</taxon>
        <taxon>Pseudomonadati</taxon>
        <taxon>Pseudomonadota</taxon>
        <taxon>Gammaproteobacteria</taxon>
        <taxon>Enterobacterales</taxon>
        <taxon>Bruguierivoracaceae</taxon>
        <taxon>Sodalis</taxon>
    </lineage>
</organism>
<protein>
    <recommendedName>
        <fullName evidence="1">Large ribosomal subunit protein bL33</fullName>
    </recommendedName>
    <alternativeName>
        <fullName evidence="2">50S ribosomal protein L33</fullName>
    </alternativeName>
</protein>
<comment type="similarity">
    <text evidence="1">Belongs to the bacterial ribosomal protein bL33 family.</text>
</comment>
<dbReference type="EMBL" id="AP008232">
    <property type="protein sequence ID" value="BAE75482.1"/>
    <property type="molecule type" value="Genomic_DNA"/>
</dbReference>
<dbReference type="RefSeq" id="WP_011412018.1">
    <property type="nucleotide sequence ID" value="NZ_LN854557.1"/>
</dbReference>
<dbReference type="SMR" id="Q2NQU3"/>
<dbReference type="STRING" id="343509.SG2207"/>
<dbReference type="KEGG" id="sgl:SG2207"/>
<dbReference type="eggNOG" id="COG0267">
    <property type="taxonomic scope" value="Bacteria"/>
</dbReference>
<dbReference type="HOGENOM" id="CLU_190949_1_1_6"/>
<dbReference type="OrthoDB" id="21586at2"/>
<dbReference type="BioCyc" id="SGLO343509:SGP1_RS20305-MONOMER"/>
<dbReference type="Proteomes" id="UP000001932">
    <property type="component" value="Chromosome"/>
</dbReference>
<dbReference type="GO" id="GO:0022625">
    <property type="term" value="C:cytosolic large ribosomal subunit"/>
    <property type="evidence" value="ECO:0007669"/>
    <property type="project" value="TreeGrafter"/>
</dbReference>
<dbReference type="GO" id="GO:0003735">
    <property type="term" value="F:structural constituent of ribosome"/>
    <property type="evidence" value="ECO:0007669"/>
    <property type="project" value="InterPro"/>
</dbReference>
<dbReference type="GO" id="GO:0006412">
    <property type="term" value="P:translation"/>
    <property type="evidence" value="ECO:0007669"/>
    <property type="project" value="UniProtKB-UniRule"/>
</dbReference>
<dbReference type="FunFam" id="2.20.28.120:FF:000001">
    <property type="entry name" value="50S ribosomal protein L33"/>
    <property type="match status" value="1"/>
</dbReference>
<dbReference type="Gene3D" id="2.20.28.120">
    <property type="entry name" value="Ribosomal protein L33"/>
    <property type="match status" value="1"/>
</dbReference>
<dbReference type="HAMAP" id="MF_00294">
    <property type="entry name" value="Ribosomal_bL33"/>
    <property type="match status" value="1"/>
</dbReference>
<dbReference type="InterPro" id="IPR001705">
    <property type="entry name" value="Ribosomal_bL33"/>
</dbReference>
<dbReference type="InterPro" id="IPR018264">
    <property type="entry name" value="Ribosomal_bL33_CS"/>
</dbReference>
<dbReference type="InterPro" id="IPR038584">
    <property type="entry name" value="Ribosomal_bL33_sf"/>
</dbReference>
<dbReference type="InterPro" id="IPR011332">
    <property type="entry name" value="Ribosomal_zn-bd"/>
</dbReference>
<dbReference type="NCBIfam" id="NF001860">
    <property type="entry name" value="PRK00595.1"/>
    <property type="match status" value="1"/>
</dbReference>
<dbReference type="NCBIfam" id="TIGR01023">
    <property type="entry name" value="rpmG_bact"/>
    <property type="match status" value="1"/>
</dbReference>
<dbReference type="PANTHER" id="PTHR15238">
    <property type="entry name" value="54S RIBOSOMAL PROTEIN L39, MITOCHONDRIAL"/>
    <property type="match status" value="1"/>
</dbReference>
<dbReference type="PANTHER" id="PTHR15238:SF1">
    <property type="entry name" value="LARGE RIBOSOMAL SUBUNIT PROTEIN BL33M"/>
    <property type="match status" value="1"/>
</dbReference>
<dbReference type="Pfam" id="PF00471">
    <property type="entry name" value="Ribosomal_L33"/>
    <property type="match status" value="1"/>
</dbReference>
<dbReference type="SUPFAM" id="SSF57829">
    <property type="entry name" value="Zn-binding ribosomal proteins"/>
    <property type="match status" value="1"/>
</dbReference>
<dbReference type="PROSITE" id="PS00582">
    <property type="entry name" value="RIBOSOMAL_L33"/>
    <property type="match status" value="1"/>
</dbReference>
<sequence length="55" mass="6376">MAKGVREKIKLVSSAGTGHFYTTTKNKRTKPEKMELKKFDPVVRQHVIYKEAKIK</sequence>
<accession>Q2NQU3</accession>
<reference key="1">
    <citation type="journal article" date="2006" name="Genome Res.">
        <title>Massive genome erosion and functional adaptations provide insights into the symbiotic lifestyle of Sodalis glossinidius in the tsetse host.</title>
        <authorList>
            <person name="Toh H."/>
            <person name="Weiss B.L."/>
            <person name="Perkin S.A.H."/>
            <person name="Yamashita A."/>
            <person name="Oshima K."/>
            <person name="Hattori M."/>
            <person name="Aksoy S."/>
        </authorList>
    </citation>
    <scope>NUCLEOTIDE SEQUENCE [LARGE SCALE GENOMIC DNA]</scope>
    <source>
        <strain>morsitans</strain>
    </source>
</reference>
<name>RL33_SODGM</name>
<proteinExistence type="inferred from homology"/>
<keyword id="KW-0687">Ribonucleoprotein</keyword>
<keyword id="KW-0689">Ribosomal protein</keyword>
<evidence type="ECO:0000255" key="1">
    <source>
        <dbReference type="HAMAP-Rule" id="MF_00294"/>
    </source>
</evidence>
<evidence type="ECO:0000305" key="2"/>